<evidence type="ECO:0000250" key="1"/>
<evidence type="ECO:0000250" key="2">
    <source>
        <dbReference type="UniProtKB" id="Q99576"/>
    </source>
</evidence>
<evidence type="ECO:0000250" key="3">
    <source>
        <dbReference type="UniProtKB" id="Q9Z2S7"/>
    </source>
</evidence>
<evidence type="ECO:0000256" key="4">
    <source>
        <dbReference type="SAM" id="MobiDB-lite"/>
    </source>
</evidence>
<evidence type="ECO:0000305" key="5"/>
<evidence type="ECO:0007744" key="6">
    <source>
    </source>
</evidence>
<sequence>MNTEMYQTPMEVAVYQLHNFSISFFSSLLGGDVVSVKLDNSASGASVVALDNKIEQAMDLVKNHLMYAVREEVEVLKEQIRELVEKNSQLERENTLLKTLASPEQLEKFQSRLSPEEPAPEAPETPEAPGGSAV</sequence>
<dbReference type="EMBL" id="AB025431">
    <property type="protein sequence ID" value="BAB18679.1"/>
    <property type="molecule type" value="mRNA"/>
</dbReference>
<dbReference type="EMBL" id="BC061979">
    <property type="protein sequence ID" value="AAH61979.1"/>
    <property type="molecule type" value="mRNA"/>
</dbReference>
<dbReference type="RefSeq" id="NP_112635.1">
    <property type="nucleotide sequence ID" value="NM_031345.2"/>
</dbReference>
<dbReference type="SMR" id="Q9EQZ1"/>
<dbReference type="FunCoup" id="Q9EQZ1">
    <property type="interactions" value="56"/>
</dbReference>
<dbReference type="STRING" id="10116.ENSRNOP00000072713"/>
<dbReference type="iPTMnet" id="Q9EQZ1"/>
<dbReference type="PhosphoSitePlus" id="Q9EQZ1"/>
<dbReference type="jPOST" id="Q9EQZ1"/>
<dbReference type="PaxDb" id="10116-ENSRNOP00000051018"/>
<dbReference type="Ensembl" id="ENSRNOT00000085118.2">
    <property type="protein sequence ID" value="ENSRNOP00000072713.1"/>
    <property type="gene ID" value="ENSRNOG00000056135.2"/>
</dbReference>
<dbReference type="GeneID" id="83514"/>
<dbReference type="KEGG" id="rno:83514"/>
<dbReference type="UCSC" id="RGD:621654">
    <property type="organism name" value="rat"/>
</dbReference>
<dbReference type="AGR" id="RGD:621654"/>
<dbReference type="CTD" id="1831"/>
<dbReference type="RGD" id="621654">
    <property type="gene designation" value="Tsc22d3"/>
</dbReference>
<dbReference type="eggNOG" id="KOG4797">
    <property type="taxonomic scope" value="Eukaryota"/>
</dbReference>
<dbReference type="GeneTree" id="ENSGT00940000156656"/>
<dbReference type="HOGENOM" id="CLU_148757_0_0_1"/>
<dbReference type="InParanoid" id="Q9EQZ1"/>
<dbReference type="OMA" id="EMYQSPM"/>
<dbReference type="OrthoDB" id="8961796at2759"/>
<dbReference type="PRO" id="PR:Q9EQZ1"/>
<dbReference type="Proteomes" id="UP000002494">
    <property type="component" value="Chromosome X"/>
</dbReference>
<dbReference type="Bgee" id="ENSRNOG00000056135">
    <property type="expression patterns" value="Expressed in lung and 19 other cell types or tissues"/>
</dbReference>
<dbReference type="GO" id="GO:0005737">
    <property type="term" value="C:cytoplasm"/>
    <property type="evidence" value="ECO:0007669"/>
    <property type="project" value="UniProtKB-SubCell"/>
</dbReference>
<dbReference type="GO" id="GO:0005634">
    <property type="term" value="C:nucleus"/>
    <property type="evidence" value="ECO:0000266"/>
    <property type="project" value="RGD"/>
</dbReference>
<dbReference type="GO" id="GO:0007589">
    <property type="term" value="P:body fluid secretion"/>
    <property type="evidence" value="ECO:0000270"/>
    <property type="project" value="RGD"/>
</dbReference>
<dbReference type="GO" id="GO:0070236">
    <property type="term" value="P:negative regulation of activation-induced cell death of T cells"/>
    <property type="evidence" value="ECO:0000266"/>
    <property type="project" value="RGD"/>
</dbReference>
<dbReference type="GO" id="GO:0006357">
    <property type="term" value="P:regulation of transcription by RNA polymerase II"/>
    <property type="evidence" value="ECO:0007669"/>
    <property type="project" value="InterPro"/>
</dbReference>
<dbReference type="GO" id="GO:0006970">
    <property type="term" value="P:response to osmotic stress"/>
    <property type="evidence" value="ECO:0000266"/>
    <property type="project" value="RGD"/>
</dbReference>
<dbReference type="CDD" id="cd21940">
    <property type="entry name" value="ZIP_TSC22D3"/>
    <property type="match status" value="1"/>
</dbReference>
<dbReference type="FunFam" id="1.20.5.490:FF:000002">
    <property type="entry name" value="TSC22 domain family, member 1"/>
    <property type="match status" value="1"/>
</dbReference>
<dbReference type="Gene3D" id="1.20.5.490">
    <property type="entry name" value="Single helix bin"/>
    <property type="match status" value="1"/>
</dbReference>
<dbReference type="InterPro" id="IPR000580">
    <property type="entry name" value="TSC22/Bun"/>
</dbReference>
<dbReference type="InterPro" id="IPR047862">
    <property type="entry name" value="TSC22/BUN_CS"/>
</dbReference>
<dbReference type="PANTHER" id="PTHR12348">
    <property type="entry name" value="TSC22"/>
    <property type="match status" value="1"/>
</dbReference>
<dbReference type="PANTHER" id="PTHR12348:SF24">
    <property type="entry name" value="TSC22 DOMAIN FAMILY PROTEIN 3"/>
    <property type="match status" value="1"/>
</dbReference>
<dbReference type="Pfam" id="PF01166">
    <property type="entry name" value="TSC22"/>
    <property type="match status" value="1"/>
</dbReference>
<dbReference type="SUPFAM" id="SSF58026">
    <property type="entry name" value="Delta-sleep-inducing peptide immunoreactive peptide"/>
    <property type="match status" value="1"/>
</dbReference>
<dbReference type="PROSITE" id="PS01289">
    <property type="entry name" value="TSC22"/>
    <property type="match status" value="1"/>
</dbReference>
<protein>
    <recommendedName>
        <fullName>TSC22 domain family protein 3</fullName>
    </recommendedName>
    <alternativeName>
        <fullName>Glucocorticoid-induced leucine zipper protein</fullName>
    </alternativeName>
</protein>
<feature type="chain" id="PRO_0000219373" description="TSC22 domain family protein 3">
    <location>
        <begin position="1"/>
        <end position="134"/>
    </location>
</feature>
<feature type="region of interest" description="AP1-binding" evidence="1">
    <location>
        <begin position="1"/>
        <end position="60"/>
    </location>
</feature>
<feature type="region of interest" description="Leucine-zipper">
    <location>
        <begin position="76"/>
        <end position="97"/>
    </location>
</feature>
<feature type="region of interest" description="Disordered" evidence="4">
    <location>
        <begin position="101"/>
        <end position="134"/>
    </location>
</feature>
<feature type="compositionally biased region" description="Low complexity" evidence="4">
    <location>
        <begin position="125"/>
        <end position="134"/>
    </location>
</feature>
<feature type="modified residue" description="Phosphoserine" evidence="6">
    <location>
        <position position="102"/>
    </location>
</feature>
<feature type="modified residue" description="Phosphothreonine" evidence="3">
    <location>
        <position position="125"/>
    </location>
</feature>
<name>T22D3_RAT</name>
<comment type="function">
    <text evidence="2 3">Protects T-cells from IL2 deprivation-induced apoptosis through the inhibition of FOXO3A transcriptional activity that leads to the down-regulation of the pro-apoptotic factor BCL2L11 (By similarity). In macrophages, plays a role in the anti-inflammatory and immunosuppressive effects of glucocorticoids and IL10 (By similarity). In T-cells, inhibits anti-CD3-induced NFKB1 nuclear translocation and thereby NFKB1 DNA-binding activities (By similarity). In vitro, suppresses AP-1 transcription factor complex DNA-binding activities (By similarity).</text>
</comment>
<comment type="subunit">
    <text evidence="2 3">Can form homodimers, however it is likely to function as a monomer (By similarity). Interacts with NFKB1 (By similarity). Interacts (via N-terminus) with JUN and FOS; these interactions inhibit the binding of active AP1 to its target DNA (By similarity). Interacts with MYOD1 (By similarity). Interacts with HDAC1; this interaction affects HDAC1 activity on MYOG promoter and thus inhibits MYOD1 transcriptional activity (By similarity).</text>
</comment>
<comment type="subcellular location">
    <subcellularLocation>
        <location evidence="3">Cytoplasm</location>
    </subcellularLocation>
    <subcellularLocation>
        <location evidence="3">Nucleus</location>
    </subcellularLocation>
    <text evidence="3">Localization may depend on differentiation status of myoblasts (By similarity). In undifferentiated myoblasts; localizes to the cytoplasm, but in differentiating myoblast; localizes to the nucleus (By similarity).</text>
</comment>
<comment type="domain">
    <text evidence="3">The leucine-zipper is involved in homodimerization.</text>
</comment>
<comment type="similarity">
    <text evidence="5">Belongs to the TSC-22/Dip/Bun family.</text>
</comment>
<keyword id="KW-0963">Cytoplasm</keyword>
<keyword id="KW-0539">Nucleus</keyword>
<keyword id="KW-0597">Phosphoprotein</keyword>
<keyword id="KW-1185">Reference proteome</keyword>
<accession>Q9EQZ1</accession>
<gene>
    <name type="primary">Tsc22d3</name>
    <name type="synonym">Dsipi</name>
    <name type="synonym">Gilz</name>
</gene>
<reference key="1">
    <citation type="submission" date="1999-03" db="EMBL/GenBank/DDBJ databases">
        <authorList>
            <person name="Okada T."/>
        </authorList>
    </citation>
    <scope>NUCLEOTIDE SEQUENCE [MRNA]</scope>
</reference>
<reference key="2">
    <citation type="journal article" date="2004" name="Genome Res.">
        <title>The status, quality, and expansion of the NIH full-length cDNA project: the Mammalian Gene Collection (MGC).</title>
        <authorList>
            <consortium name="The MGC Project Team"/>
        </authorList>
    </citation>
    <scope>NUCLEOTIDE SEQUENCE [LARGE SCALE MRNA]</scope>
    <source>
        <tissue>Prostate</tissue>
    </source>
</reference>
<reference key="3">
    <citation type="journal article" date="2012" name="Nat. Commun.">
        <title>Quantitative maps of protein phosphorylation sites across 14 different rat organs and tissues.</title>
        <authorList>
            <person name="Lundby A."/>
            <person name="Secher A."/>
            <person name="Lage K."/>
            <person name="Nordsborg N.B."/>
            <person name="Dmytriyev A."/>
            <person name="Lundby C."/>
            <person name="Olsen J.V."/>
        </authorList>
    </citation>
    <scope>PHOSPHORYLATION [LARGE SCALE ANALYSIS] AT SER-102</scope>
    <scope>IDENTIFICATION BY MASS SPECTROMETRY [LARGE SCALE ANALYSIS]</scope>
</reference>
<organism>
    <name type="scientific">Rattus norvegicus</name>
    <name type="common">Rat</name>
    <dbReference type="NCBI Taxonomy" id="10116"/>
    <lineage>
        <taxon>Eukaryota</taxon>
        <taxon>Metazoa</taxon>
        <taxon>Chordata</taxon>
        <taxon>Craniata</taxon>
        <taxon>Vertebrata</taxon>
        <taxon>Euteleostomi</taxon>
        <taxon>Mammalia</taxon>
        <taxon>Eutheria</taxon>
        <taxon>Euarchontoglires</taxon>
        <taxon>Glires</taxon>
        <taxon>Rodentia</taxon>
        <taxon>Myomorpha</taxon>
        <taxon>Muroidea</taxon>
        <taxon>Muridae</taxon>
        <taxon>Murinae</taxon>
        <taxon>Rattus</taxon>
    </lineage>
</organism>
<proteinExistence type="evidence at protein level"/>